<reference key="1">
    <citation type="journal article" date="2008" name="Nature">
        <title>The virophage as a unique parasite of the giant mimivirus.</title>
        <authorList>
            <person name="La Scola B."/>
            <person name="Desnues C."/>
            <person name="Pagnier I."/>
            <person name="Robert C."/>
            <person name="Barrassi L."/>
            <person name="Fournous G."/>
            <person name="Merchat M."/>
            <person name="Suzan-Monti M."/>
            <person name="Forterre P."/>
            <person name="Koonin E."/>
            <person name="Raoult D."/>
        </authorList>
    </citation>
    <scope>NUCLEOTIDE SEQUENCE [GENOMIC DNA]</scope>
</reference>
<organism>
    <name type="scientific">Sputnik virophage</name>
    <dbReference type="NCBI Taxonomy" id="543939"/>
    <lineage>
        <taxon>Viruses</taxon>
        <taxon>Varidnaviria</taxon>
        <taxon>Bamfordvirae</taxon>
        <taxon>Preplasmiviricota</taxon>
        <taxon>Maveriviricetes</taxon>
        <taxon>Priklausovirales</taxon>
        <taxon>Lavidaviridae</taxon>
        <taxon>Sputnikvirus</taxon>
        <taxon>Mimivirus-dependent virus Sputnik</taxon>
    </lineage>
</organism>
<organismHost>
    <name type="scientific">Acanthamoeba polyphaga</name>
    <name type="common">Amoeba</name>
    <dbReference type="NCBI Taxonomy" id="5757"/>
</organismHost>
<sequence>MSKVQLYGTPMRGGCCGGCECPNCGFKLGGVVAGVLAGGKVSKRRKSVAKKGGIGTKGGAKKSPWVAFLQRYSKEHGVKYSEAMQSPKAKKEYSALKKSGKIHKVGGSKSSGHRKTKKPKKSMKGGSKTKKLSEKQLMKELLAM</sequence>
<keyword id="KW-1185">Reference proteome</keyword>
<dbReference type="EMBL" id="EU606015">
    <property type="protein sequence ID" value="ACF16985.1"/>
    <property type="molecule type" value="Genomic_DNA"/>
</dbReference>
<dbReference type="RefSeq" id="YP_002122362.1">
    <property type="nucleotide sequence ID" value="NC_011132.1"/>
</dbReference>
<dbReference type="SMR" id="B4YNE1"/>
<dbReference type="KEGG" id="vg:6760351"/>
<dbReference type="Proteomes" id="UP000001863">
    <property type="component" value="Segment"/>
</dbReference>
<gene>
    <name type="ORF">ORF1</name>
</gene>
<proteinExistence type="predicted"/>
<protein>
    <recommendedName>
        <fullName>Uncharacterized protein V1</fullName>
    </recommendedName>
</protein>
<name>V1_SPTNK</name>
<feature type="chain" id="PRO_0000369809" description="Uncharacterized protein V1">
    <location>
        <begin position="1"/>
        <end position="144"/>
    </location>
</feature>
<feature type="region of interest" description="Disordered" evidence="1">
    <location>
        <begin position="90"/>
        <end position="144"/>
    </location>
</feature>
<feature type="compositionally biased region" description="Basic residues" evidence="1">
    <location>
        <begin position="98"/>
        <end position="130"/>
    </location>
</feature>
<accession>B4YNE1</accession>
<evidence type="ECO:0000256" key="1">
    <source>
        <dbReference type="SAM" id="MobiDB-lite"/>
    </source>
</evidence>